<comment type="function">
    <text evidence="1">Carrier of the growing fatty acid chain in fatty acid biosynthesis.</text>
</comment>
<comment type="pathway">
    <text evidence="1">Lipid metabolism; fatty acid biosynthesis.</text>
</comment>
<comment type="subcellular location">
    <subcellularLocation>
        <location evidence="1">Cytoplasm</location>
    </subcellularLocation>
</comment>
<comment type="PTM">
    <text evidence="1">4'-phosphopantetheine is transferred from CoA to a specific serine of apo-ACP by AcpS. This modification is essential for activity because fatty acids are bound in thioester linkage to the sulfhydryl of the prosthetic group.</text>
</comment>
<comment type="similarity">
    <text evidence="1">Belongs to the acyl carrier protein (ACP) family.</text>
</comment>
<name>ACP_AKKM8</name>
<proteinExistence type="inferred from homology"/>
<dbReference type="EMBL" id="CP001071">
    <property type="protein sequence ID" value="ACD04807.1"/>
    <property type="molecule type" value="Genomic_DNA"/>
</dbReference>
<dbReference type="RefSeq" id="WP_012420022.1">
    <property type="nucleotide sequence ID" value="NZ_CP071807.1"/>
</dbReference>
<dbReference type="SMR" id="B2UQS2"/>
<dbReference type="STRING" id="349741.Amuc_0975"/>
<dbReference type="PaxDb" id="349741-Amuc_0975"/>
<dbReference type="KEGG" id="amu:Amuc_0975"/>
<dbReference type="eggNOG" id="COG0236">
    <property type="taxonomic scope" value="Bacteria"/>
</dbReference>
<dbReference type="HOGENOM" id="CLU_108696_5_1_0"/>
<dbReference type="OrthoDB" id="9804551at2"/>
<dbReference type="BioCyc" id="AMUC349741:G1GBX-1048-MONOMER"/>
<dbReference type="UniPathway" id="UPA00094"/>
<dbReference type="Proteomes" id="UP000001031">
    <property type="component" value="Chromosome"/>
</dbReference>
<dbReference type="GO" id="GO:0005829">
    <property type="term" value="C:cytosol"/>
    <property type="evidence" value="ECO:0007669"/>
    <property type="project" value="TreeGrafter"/>
</dbReference>
<dbReference type="GO" id="GO:0016020">
    <property type="term" value="C:membrane"/>
    <property type="evidence" value="ECO:0007669"/>
    <property type="project" value="GOC"/>
</dbReference>
<dbReference type="GO" id="GO:0000035">
    <property type="term" value="F:acyl binding"/>
    <property type="evidence" value="ECO:0007669"/>
    <property type="project" value="TreeGrafter"/>
</dbReference>
<dbReference type="GO" id="GO:0000036">
    <property type="term" value="F:acyl carrier activity"/>
    <property type="evidence" value="ECO:0007669"/>
    <property type="project" value="UniProtKB-UniRule"/>
</dbReference>
<dbReference type="GO" id="GO:0009245">
    <property type="term" value="P:lipid A biosynthetic process"/>
    <property type="evidence" value="ECO:0007669"/>
    <property type="project" value="TreeGrafter"/>
</dbReference>
<dbReference type="FunFam" id="1.10.1200.10:FF:000001">
    <property type="entry name" value="Acyl carrier protein"/>
    <property type="match status" value="1"/>
</dbReference>
<dbReference type="Gene3D" id="1.10.1200.10">
    <property type="entry name" value="ACP-like"/>
    <property type="match status" value="1"/>
</dbReference>
<dbReference type="HAMAP" id="MF_01217">
    <property type="entry name" value="Acyl_carrier"/>
    <property type="match status" value="1"/>
</dbReference>
<dbReference type="InterPro" id="IPR003231">
    <property type="entry name" value="ACP"/>
</dbReference>
<dbReference type="InterPro" id="IPR036736">
    <property type="entry name" value="ACP-like_sf"/>
</dbReference>
<dbReference type="InterPro" id="IPR009081">
    <property type="entry name" value="PP-bd_ACP"/>
</dbReference>
<dbReference type="InterPro" id="IPR006162">
    <property type="entry name" value="Ppantetheine_attach_site"/>
</dbReference>
<dbReference type="NCBIfam" id="TIGR00517">
    <property type="entry name" value="acyl_carrier"/>
    <property type="match status" value="1"/>
</dbReference>
<dbReference type="NCBIfam" id="NF002148">
    <property type="entry name" value="PRK00982.1-2"/>
    <property type="match status" value="1"/>
</dbReference>
<dbReference type="NCBIfam" id="NF002149">
    <property type="entry name" value="PRK00982.1-3"/>
    <property type="match status" value="1"/>
</dbReference>
<dbReference type="NCBIfam" id="NF002150">
    <property type="entry name" value="PRK00982.1-4"/>
    <property type="match status" value="1"/>
</dbReference>
<dbReference type="NCBIfam" id="NF002151">
    <property type="entry name" value="PRK00982.1-5"/>
    <property type="match status" value="1"/>
</dbReference>
<dbReference type="PANTHER" id="PTHR20863">
    <property type="entry name" value="ACYL CARRIER PROTEIN"/>
    <property type="match status" value="1"/>
</dbReference>
<dbReference type="PANTHER" id="PTHR20863:SF76">
    <property type="entry name" value="CARRIER DOMAIN-CONTAINING PROTEIN"/>
    <property type="match status" value="1"/>
</dbReference>
<dbReference type="Pfam" id="PF00550">
    <property type="entry name" value="PP-binding"/>
    <property type="match status" value="1"/>
</dbReference>
<dbReference type="SUPFAM" id="SSF47336">
    <property type="entry name" value="ACP-like"/>
    <property type="match status" value="1"/>
</dbReference>
<dbReference type="PROSITE" id="PS50075">
    <property type="entry name" value="CARRIER"/>
    <property type="match status" value="1"/>
</dbReference>
<dbReference type="PROSITE" id="PS00012">
    <property type="entry name" value="PHOSPHOPANTETHEINE"/>
    <property type="match status" value="1"/>
</dbReference>
<accession>B2UQS2</accession>
<feature type="chain" id="PRO_1000138995" description="Acyl carrier protein">
    <location>
        <begin position="1"/>
        <end position="80"/>
    </location>
</feature>
<feature type="domain" description="Carrier" evidence="2">
    <location>
        <begin position="4"/>
        <end position="79"/>
    </location>
</feature>
<feature type="modified residue" description="O-(pantetheine 4'-phosphoryl)serine" evidence="2">
    <location>
        <position position="39"/>
    </location>
</feature>
<keyword id="KW-0963">Cytoplasm</keyword>
<keyword id="KW-0275">Fatty acid biosynthesis</keyword>
<keyword id="KW-0276">Fatty acid metabolism</keyword>
<keyword id="KW-0444">Lipid biosynthesis</keyword>
<keyword id="KW-0443">Lipid metabolism</keyword>
<keyword id="KW-0596">Phosphopantetheine</keyword>
<keyword id="KW-0597">Phosphoprotein</keyword>
<keyword id="KW-1185">Reference proteome</keyword>
<gene>
    <name evidence="1" type="primary">acpP</name>
    <name type="ordered locus">Amuc_0975</name>
</gene>
<evidence type="ECO:0000255" key="1">
    <source>
        <dbReference type="HAMAP-Rule" id="MF_01217"/>
    </source>
</evidence>
<evidence type="ECO:0000255" key="2">
    <source>
        <dbReference type="PROSITE-ProRule" id="PRU00258"/>
    </source>
</evidence>
<reference key="1">
    <citation type="journal article" date="2011" name="PLoS ONE">
        <title>The genome of Akkermansia muciniphila, a dedicated intestinal mucin degrader, and its use in exploring intestinal metagenomes.</title>
        <authorList>
            <person name="van Passel M.W."/>
            <person name="Kant R."/>
            <person name="Zoetendal E.G."/>
            <person name="Plugge C.M."/>
            <person name="Derrien M."/>
            <person name="Malfatti S.A."/>
            <person name="Chain P.S."/>
            <person name="Woyke T."/>
            <person name="Palva A."/>
            <person name="de Vos W.M."/>
            <person name="Smidt H."/>
        </authorList>
    </citation>
    <scope>NUCLEOTIDE SEQUENCE [LARGE SCALE GENOMIC DNA]</scope>
    <source>
        <strain>ATCC BAA-835 / DSM 22959 / JCM 33894 / BCRC 81048 / CCUG 64013 / CIP 107961 / Muc</strain>
    </source>
</reference>
<organism>
    <name type="scientific">Akkermansia muciniphila (strain ATCC BAA-835 / DSM 22959 / JCM 33894 / BCRC 81048 / CCUG 64013 / CIP 107961 / Muc)</name>
    <dbReference type="NCBI Taxonomy" id="349741"/>
    <lineage>
        <taxon>Bacteria</taxon>
        <taxon>Pseudomonadati</taxon>
        <taxon>Verrucomicrobiota</taxon>
        <taxon>Verrucomicrobiia</taxon>
        <taxon>Verrucomicrobiales</taxon>
        <taxon>Akkermansiaceae</taxon>
        <taxon>Akkermansia</taxon>
    </lineage>
</organism>
<sequence>MSDNSIEEKVRSIIVDQLGVESDKVTADAKFIEDLGADSLDTVELVMAFEENFDIEVPDEEAEKLQSVADVVAYIEKVQG</sequence>
<protein>
    <recommendedName>
        <fullName evidence="1">Acyl carrier protein</fullName>
        <shortName evidence="1">ACP</shortName>
    </recommendedName>
</protein>